<comment type="function">
    <text evidence="4">Positively regulates lysosome peripheral distribution and ruffled border formation in osteoclasts (PubMed:27777970). Involved in bone resorption (PubMed:27777970).</text>
</comment>
<comment type="subunit">
    <text evidence="4">Interacts (via C-terminus) with PLEKHM1; this interaction is weak but increased in a RAB7A-dependent manner (PubMed:27777970).</text>
</comment>
<comment type="alternative products">
    <event type="alternative splicing"/>
    <isoform>
        <id>Q99J78-1</id>
        <name>1</name>
        <sequence type="displayed"/>
    </isoform>
    <isoform>
        <id>Q99J78-2</id>
        <name>2</name>
        <sequence type="described" ref="VSP_031825"/>
    </isoform>
</comment>
<comment type="tissue specificity">
    <text evidence="3">Abundantly expressed in peripheral blood leukocytes. Highly expressed in B-cells. Also present in lymph node and appendix. Down-regulated upon macrophage/granulocyte differentiation. Weakly expressed in bone marrow and spleen. Weakly or not expressed in thymus and fetal liver.</text>
</comment>
<comment type="developmental stage">
    <text evidence="3">Abundantly expressed during embryogenesis.</text>
</comment>
<comment type="similarity">
    <text evidence="6">Belongs to the DEF8 family.</text>
</comment>
<comment type="sequence caution" evidence="6">
    <conflict type="erroneous initiation">
        <sequence resource="EMBL-CDS" id="BAC34239"/>
    </conflict>
</comment>
<comment type="sequence caution" evidence="6">
    <conflict type="frameshift">
        <sequence resource="EMBL" id="X96708"/>
    </conflict>
</comment>
<proteinExistence type="evidence at protein level"/>
<dbReference type="EMBL" id="AK034028">
    <property type="protein sequence ID" value="BAC28551.1"/>
    <property type="molecule type" value="mRNA"/>
</dbReference>
<dbReference type="EMBL" id="AK050405">
    <property type="protein sequence ID" value="BAC34239.1"/>
    <property type="status" value="ALT_INIT"/>
    <property type="molecule type" value="mRNA"/>
</dbReference>
<dbReference type="EMBL" id="AK081295">
    <property type="protein sequence ID" value="BAC38184.1"/>
    <property type="molecule type" value="mRNA"/>
</dbReference>
<dbReference type="EMBL" id="AK087778">
    <property type="protein sequence ID" value="BAC39999.1"/>
    <property type="molecule type" value="mRNA"/>
</dbReference>
<dbReference type="EMBL" id="AK133979">
    <property type="protein sequence ID" value="BAE21966.1"/>
    <property type="molecule type" value="mRNA"/>
</dbReference>
<dbReference type="EMBL" id="AK150334">
    <property type="protein sequence ID" value="BAE29476.1"/>
    <property type="molecule type" value="mRNA"/>
</dbReference>
<dbReference type="EMBL" id="AK150994">
    <property type="protein sequence ID" value="BAE30018.1"/>
    <property type="molecule type" value="mRNA"/>
</dbReference>
<dbReference type="EMBL" id="AK164147">
    <property type="protein sequence ID" value="BAE37649.1"/>
    <property type="molecule type" value="mRNA"/>
</dbReference>
<dbReference type="EMBL" id="BC003306">
    <property type="protein sequence ID" value="AAH03306.1"/>
    <property type="molecule type" value="mRNA"/>
</dbReference>
<dbReference type="EMBL" id="X96708">
    <property type="status" value="NOT_ANNOTATED_CDS"/>
    <property type="molecule type" value="mRNA"/>
</dbReference>
<dbReference type="CCDS" id="CCDS22759.1">
    <molecule id="Q99J78-1"/>
</dbReference>
<dbReference type="RefSeq" id="NP_001240712.1">
    <property type="nucleotide sequence ID" value="NM_001253783.1"/>
</dbReference>
<dbReference type="RefSeq" id="NP_001240713.1">
    <property type="nucleotide sequence ID" value="NM_001253784.1"/>
</dbReference>
<dbReference type="RefSeq" id="NP_001268732.1">
    <molecule id="Q99J78-1"/>
    <property type="nucleotide sequence ID" value="NM_001281803.2"/>
</dbReference>
<dbReference type="RefSeq" id="NP_001401210.1">
    <molecule id="Q99J78-2"/>
    <property type="nucleotide sequence ID" value="NM_001414281.1"/>
</dbReference>
<dbReference type="RefSeq" id="NP_001401214.1">
    <molecule id="Q99J78-1"/>
    <property type="nucleotide sequence ID" value="NM_001414285.1"/>
</dbReference>
<dbReference type="RefSeq" id="NP_001401215.1">
    <molecule id="Q99J78-1"/>
    <property type="nucleotide sequence ID" value="NM_001414286.1"/>
</dbReference>
<dbReference type="RefSeq" id="NP_001401216.1">
    <molecule id="Q99J78-1"/>
    <property type="nucleotide sequence ID" value="NM_001414287.1"/>
</dbReference>
<dbReference type="RefSeq" id="NP_473387.1">
    <molecule id="Q99J78-1"/>
    <property type="nucleotide sequence ID" value="NM_054046.6"/>
</dbReference>
<dbReference type="RefSeq" id="XP_006531039.1">
    <property type="nucleotide sequence ID" value="XM_006530976.3"/>
</dbReference>
<dbReference type="RefSeq" id="XP_006531040.1">
    <molecule id="Q99J78-1"/>
    <property type="nucleotide sequence ID" value="XM_006530977.5"/>
</dbReference>
<dbReference type="RefSeq" id="XP_006531041.1">
    <property type="nucleotide sequence ID" value="XM_006530978.3"/>
</dbReference>
<dbReference type="SMR" id="Q99J78"/>
<dbReference type="FunCoup" id="Q99J78">
    <property type="interactions" value="31"/>
</dbReference>
<dbReference type="STRING" id="10090.ENSMUSP00000104460"/>
<dbReference type="iPTMnet" id="Q99J78"/>
<dbReference type="PhosphoSitePlus" id="Q99J78"/>
<dbReference type="PaxDb" id="10090-ENSMUSP00000070579"/>
<dbReference type="PeptideAtlas" id="Q99J78"/>
<dbReference type="ProteomicsDB" id="277310">
    <molecule id="Q99J78-1"/>
</dbReference>
<dbReference type="ProteomicsDB" id="277311">
    <molecule id="Q99J78-2"/>
</dbReference>
<dbReference type="Pumba" id="Q99J78"/>
<dbReference type="Antibodypedia" id="57197">
    <property type="antibodies" value="164 antibodies from 17 providers"/>
</dbReference>
<dbReference type="DNASU" id="23854"/>
<dbReference type="Ensembl" id="ENSMUST00000065534.10">
    <molecule id="Q99J78-1"/>
    <property type="protein sequence ID" value="ENSMUSP00000070579.4"/>
    <property type="gene ID" value="ENSMUSG00000001482.16"/>
</dbReference>
<dbReference type="Ensembl" id="ENSMUST00000093049.10">
    <molecule id="Q99J78-2"/>
    <property type="protein sequence ID" value="ENSMUSP00000090737.4"/>
    <property type="gene ID" value="ENSMUSG00000001482.16"/>
</dbReference>
<dbReference type="Ensembl" id="ENSMUST00000108830.2">
    <molecule id="Q99J78-1"/>
    <property type="protein sequence ID" value="ENSMUSP00000104458.2"/>
    <property type="gene ID" value="ENSMUSG00000001482.16"/>
</dbReference>
<dbReference type="GeneID" id="23854"/>
<dbReference type="KEGG" id="mmu:23854"/>
<dbReference type="UCSC" id="uc009nvx.2">
    <molecule id="Q99J78-2"/>
    <property type="organism name" value="mouse"/>
</dbReference>
<dbReference type="UCSC" id="uc009nvy.2">
    <molecule id="Q99J78-1"/>
    <property type="organism name" value="mouse"/>
</dbReference>
<dbReference type="AGR" id="MGI:1346331"/>
<dbReference type="CTD" id="54849"/>
<dbReference type="MGI" id="MGI:1346331">
    <property type="gene designation" value="Def8"/>
</dbReference>
<dbReference type="VEuPathDB" id="HostDB:ENSMUSG00000001482"/>
<dbReference type="eggNOG" id="KOG1829">
    <property type="taxonomic scope" value="Eukaryota"/>
</dbReference>
<dbReference type="GeneTree" id="ENSGT00940000159182"/>
<dbReference type="HOGENOM" id="CLU_034500_4_0_1"/>
<dbReference type="InParanoid" id="Q99J78"/>
<dbReference type="OrthoDB" id="1918044at2759"/>
<dbReference type="PhylomeDB" id="Q99J78"/>
<dbReference type="TreeFam" id="TF317067"/>
<dbReference type="BioGRID-ORCS" id="23854">
    <property type="hits" value="1 hit in 77 CRISPR screens"/>
</dbReference>
<dbReference type="ChiTaRS" id="Def8">
    <property type="organism name" value="mouse"/>
</dbReference>
<dbReference type="PRO" id="PR:Q99J78"/>
<dbReference type="Proteomes" id="UP000000589">
    <property type="component" value="Chromosome 8"/>
</dbReference>
<dbReference type="RNAct" id="Q99J78">
    <property type="molecule type" value="protein"/>
</dbReference>
<dbReference type="Bgee" id="ENSMUSG00000001482">
    <property type="expression patterns" value="Expressed in right kidney and 248 other cell types or tissues"/>
</dbReference>
<dbReference type="ExpressionAtlas" id="Q99J78">
    <property type="expression patterns" value="baseline and differential"/>
</dbReference>
<dbReference type="GO" id="GO:0008270">
    <property type="term" value="F:zinc ion binding"/>
    <property type="evidence" value="ECO:0007669"/>
    <property type="project" value="UniProtKB-KW"/>
</dbReference>
<dbReference type="GO" id="GO:0032418">
    <property type="term" value="P:lysosome localization"/>
    <property type="evidence" value="ECO:0000315"/>
    <property type="project" value="UniProtKB"/>
</dbReference>
<dbReference type="GO" id="GO:0045780">
    <property type="term" value="P:positive regulation of bone resorption"/>
    <property type="evidence" value="ECO:0000315"/>
    <property type="project" value="UniProtKB"/>
</dbReference>
<dbReference type="GO" id="GO:1900029">
    <property type="term" value="P:positive regulation of ruffle assembly"/>
    <property type="evidence" value="ECO:0000315"/>
    <property type="project" value="UniProtKB"/>
</dbReference>
<dbReference type="CDD" id="cd20819">
    <property type="entry name" value="C1_DEF8"/>
    <property type="match status" value="1"/>
</dbReference>
<dbReference type="FunFam" id="3.30.60.20:FF:000042">
    <property type="entry name" value="differentially expressed in FDCP 8 homolog isoform X2"/>
    <property type="match status" value="1"/>
</dbReference>
<dbReference type="Gene3D" id="3.30.60.20">
    <property type="match status" value="1"/>
</dbReference>
<dbReference type="InterPro" id="IPR046349">
    <property type="entry name" value="C1-like_sf"/>
</dbReference>
<dbReference type="InterPro" id="IPR051366">
    <property type="entry name" value="DEF8"/>
</dbReference>
<dbReference type="InterPro" id="IPR047983">
    <property type="entry name" value="DEF8_C1"/>
</dbReference>
<dbReference type="InterPro" id="IPR002219">
    <property type="entry name" value="PE/DAG-bd"/>
</dbReference>
<dbReference type="InterPro" id="IPR025258">
    <property type="entry name" value="RH_dom"/>
</dbReference>
<dbReference type="PANTHER" id="PTHR12326:SF3">
    <property type="entry name" value="DIFFERENTIALLY EXPRESSED IN FDCP 8 HOMOLOG"/>
    <property type="match status" value="1"/>
</dbReference>
<dbReference type="PANTHER" id="PTHR12326">
    <property type="entry name" value="PLECKSTRIN HOMOLOGY DOMAIN CONTAINING PROTEIN"/>
    <property type="match status" value="1"/>
</dbReference>
<dbReference type="Pfam" id="PF00130">
    <property type="entry name" value="C1_1"/>
    <property type="match status" value="1"/>
</dbReference>
<dbReference type="Pfam" id="PF13901">
    <property type="entry name" value="RH_dom"/>
    <property type="match status" value="1"/>
</dbReference>
<dbReference type="SMART" id="SM00109">
    <property type="entry name" value="C1"/>
    <property type="match status" value="2"/>
</dbReference>
<dbReference type="SMART" id="SM01175">
    <property type="entry name" value="DUF4206"/>
    <property type="match status" value="1"/>
</dbReference>
<dbReference type="SUPFAM" id="SSF57889">
    <property type="entry name" value="Cysteine-rich domain"/>
    <property type="match status" value="1"/>
</dbReference>
<dbReference type="PROSITE" id="PS00479">
    <property type="entry name" value="ZF_DAG_PE_1"/>
    <property type="match status" value="1"/>
</dbReference>
<dbReference type="PROSITE" id="PS50081">
    <property type="entry name" value="ZF_DAG_PE_2"/>
    <property type="match status" value="1"/>
</dbReference>
<name>DEFI8_MOUSE</name>
<organism>
    <name type="scientific">Mus musculus</name>
    <name type="common">Mouse</name>
    <dbReference type="NCBI Taxonomy" id="10090"/>
    <lineage>
        <taxon>Eukaryota</taxon>
        <taxon>Metazoa</taxon>
        <taxon>Chordata</taxon>
        <taxon>Craniata</taxon>
        <taxon>Vertebrata</taxon>
        <taxon>Euteleostomi</taxon>
        <taxon>Mammalia</taxon>
        <taxon>Eutheria</taxon>
        <taxon>Euarchontoglires</taxon>
        <taxon>Glires</taxon>
        <taxon>Rodentia</taxon>
        <taxon>Myomorpha</taxon>
        <taxon>Muroidea</taxon>
        <taxon>Muridae</taxon>
        <taxon>Murinae</taxon>
        <taxon>Mus</taxon>
        <taxon>Mus</taxon>
    </lineage>
</organism>
<protein>
    <recommendedName>
        <fullName>Differentially expressed in FDCP 8</fullName>
        <shortName>DEF-8</shortName>
    </recommendedName>
</protein>
<feature type="chain" id="PRO_0000321914" description="Differentially expressed in FDCP 8">
    <location>
        <begin position="1"/>
        <end position="448"/>
    </location>
</feature>
<feature type="zinc finger region" description="Phorbol-ester/DAG-type 1" evidence="1">
    <location>
        <begin position="135"/>
        <end position="186"/>
    </location>
</feature>
<feature type="zinc finger region" description="Phorbol-ester/DAG-type 2" evidence="1">
    <location>
        <begin position="365"/>
        <end position="425"/>
    </location>
</feature>
<feature type="region of interest" description="Disordered" evidence="2">
    <location>
        <begin position="18"/>
        <end position="46"/>
    </location>
</feature>
<feature type="compositionally biased region" description="Basic and acidic residues" evidence="2">
    <location>
        <begin position="25"/>
        <end position="37"/>
    </location>
</feature>
<feature type="modified residue" description="Phosphoserine" evidence="7">
    <location>
        <position position="437"/>
    </location>
</feature>
<feature type="splice variant" id="VSP_031825" description="In isoform 2." evidence="5">
    <original>DCYYDNSTTCPKCARLTLRKQSLFQEPGLDMDA</original>
    <variation>WVRPVAHSRLGVEAPPHFLSRMPSLVLGCSWSGGTWHCCPERGDRHWAFAVFLSKSFAGVRPWCLCLN</variation>
    <location>
        <begin position="416"/>
        <end position="448"/>
    </location>
</feature>
<feature type="sequence conflict" description="In Ref. 1; BAC38184." evidence="6" ref="1">
    <original>S</original>
    <variation>R</variation>
    <location>
        <position position="32"/>
    </location>
</feature>
<feature type="sequence conflict" description="In Ref. 1; BAC38184." evidence="6" ref="1">
    <original>LRQA</original>
    <variation>VRPG</variation>
    <location>
        <begin position="82"/>
        <end position="85"/>
    </location>
</feature>
<feature type="sequence conflict" description="In Ref. 1; BAC38184." evidence="6" ref="1">
    <original>K</original>
    <variation>T</variation>
    <location>
        <position position="90"/>
    </location>
</feature>
<feature type="sequence conflict" description="In Ref. 1; BAE30018/BAE29476." evidence="6" ref="1">
    <original>E</original>
    <variation>G</variation>
    <location>
        <position position="98"/>
    </location>
</feature>
<feature type="sequence conflict" description="In Ref. 1; BAC38184." evidence="6" ref="1">
    <original>S</original>
    <variation>G</variation>
    <location>
        <position position="228"/>
    </location>
</feature>
<feature type="sequence conflict" description="In Ref. 1; BAE21966." evidence="6" ref="1">
    <original>S</original>
    <variation>P</variation>
    <location>
        <position position="410"/>
    </location>
</feature>
<sequence length="448" mass="52311">MEYDEKLVRFRQAHLNPFNKQLGPRHHEQEPSEKVTSEDTLPELPAGEPEFHYSERMMDLGLSEDHFSRPVGLFLASDVQQLRQAIEECKQVILELPEQSEKQKDAVVRLIHLRLKLQELKDPNEEEPNIRVLLEHRFYKEKSKSVKQTCDKCNTIIWGLIQTWYTCTGCCYRCHSKCLNLISKPCVSSKVSHQAEYELNICPETGLDSQDYRCAECRAPISLRGVPSEARQCDYTGQYYCSHCHWNDLAVIPARVVHNWDFEPRKVSRCSMRYLALMVSRPVLRLREINPLLFNYVEELVEIRKLRQDILLMKPYFITCKEAMEARLLLQLQDRQHFVENDEMYSIQDLLEVHMGRLSCSLTEIHTLFAKHIKLDCERCQAKGFVCELCKEGDVLFPFDSHTSVCNDCSAVFHRDCYYDNSTTCPKCARLTLRKQSLFQEPGLDMDA</sequence>
<keyword id="KW-0025">Alternative splicing</keyword>
<keyword id="KW-0479">Metal-binding</keyword>
<keyword id="KW-0597">Phosphoprotein</keyword>
<keyword id="KW-1185">Reference proteome</keyword>
<keyword id="KW-0677">Repeat</keyword>
<keyword id="KW-0862">Zinc</keyword>
<keyword id="KW-0863">Zinc-finger</keyword>
<accession>Q99J78</accession>
<accession>Q3TPT6</accession>
<accession>Q3UBE6</accession>
<accession>Q3UZ91</accession>
<accession>Q8BJN0</accession>
<accession>Q8BWP0</accession>
<reference key="1">
    <citation type="journal article" date="2005" name="Science">
        <title>The transcriptional landscape of the mammalian genome.</title>
        <authorList>
            <person name="Carninci P."/>
            <person name="Kasukawa T."/>
            <person name="Katayama S."/>
            <person name="Gough J."/>
            <person name="Frith M.C."/>
            <person name="Maeda N."/>
            <person name="Oyama R."/>
            <person name="Ravasi T."/>
            <person name="Lenhard B."/>
            <person name="Wells C."/>
            <person name="Kodzius R."/>
            <person name="Shimokawa K."/>
            <person name="Bajic V.B."/>
            <person name="Brenner S.E."/>
            <person name="Batalov S."/>
            <person name="Forrest A.R."/>
            <person name="Zavolan M."/>
            <person name="Davis M.J."/>
            <person name="Wilming L.G."/>
            <person name="Aidinis V."/>
            <person name="Allen J.E."/>
            <person name="Ambesi-Impiombato A."/>
            <person name="Apweiler R."/>
            <person name="Aturaliya R.N."/>
            <person name="Bailey T.L."/>
            <person name="Bansal M."/>
            <person name="Baxter L."/>
            <person name="Beisel K.W."/>
            <person name="Bersano T."/>
            <person name="Bono H."/>
            <person name="Chalk A.M."/>
            <person name="Chiu K.P."/>
            <person name="Choudhary V."/>
            <person name="Christoffels A."/>
            <person name="Clutterbuck D.R."/>
            <person name="Crowe M.L."/>
            <person name="Dalla E."/>
            <person name="Dalrymple B.P."/>
            <person name="de Bono B."/>
            <person name="Della Gatta G."/>
            <person name="di Bernardo D."/>
            <person name="Down T."/>
            <person name="Engstrom P."/>
            <person name="Fagiolini M."/>
            <person name="Faulkner G."/>
            <person name="Fletcher C.F."/>
            <person name="Fukushima T."/>
            <person name="Furuno M."/>
            <person name="Futaki S."/>
            <person name="Gariboldi M."/>
            <person name="Georgii-Hemming P."/>
            <person name="Gingeras T.R."/>
            <person name="Gojobori T."/>
            <person name="Green R.E."/>
            <person name="Gustincich S."/>
            <person name="Harbers M."/>
            <person name="Hayashi Y."/>
            <person name="Hensch T.K."/>
            <person name="Hirokawa N."/>
            <person name="Hill D."/>
            <person name="Huminiecki L."/>
            <person name="Iacono M."/>
            <person name="Ikeo K."/>
            <person name="Iwama A."/>
            <person name="Ishikawa T."/>
            <person name="Jakt M."/>
            <person name="Kanapin A."/>
            <person name="Katoh M."/>
            <person name="Kawasawa Y."/>
            <person name="Kelso J."/>
            <person name="Kitamura H."/>
            <person name="Kitano H."/>
            <person name="Kollias G."/>
            <person name="Krishnan S.P."/>
            <person name="Kruger A."/>
            <person name="Kummerfeld S.K."/>
            <person name="Kurochkin I.V."/>
            <person name="Lareau L.F."/>
            <person name="Lazarevic D."/>
            <person name="Lipovich L."/>
            <person name="Liu J."/>
            <person name="Liuni S."/>
            <person name="McWilliam S."/>
            <person name="Madan Babu M."/>
            <person name="Madera M."/>
            <person name="Marchionni L."/>
            <person name="Matsuda H."/>
            <person name="Matsuzawa S."/>
            <person name="Miki H."/>
            <person name="Mignone F."/>
            <person name="Miyake S."/>
            <person name="Morris K."/>
            <person name="Mottagui-Tabar S."/>
            <person name="Mulder N."/>
            <person name="Nakano N."/>
            <person name="Nakauchi H."/>
            <person name="Ng P."/>
            <person name="Nilsson R."/>
            <person name="Nishiguchi S."/>
            <person name="Nishikawa S."/>
            <person name="Nori F."/>
            <person name="Ohara O."/>
            <person name="Okazaki Y."/>
            <person name="Orlando V."/>
            <person name="Pang K.C."/>
            <person name="Pavan W.J."/>
            <person name="Pavesi G."/>
            <person name="Pesole G."/>
            <person name="Petrovsky N."/>
            <person name="Piazza S."/>
            <person name="Reed J."/>
            <person name="Reid J.F."/>
            <person name="Ring B.Z."/>
            <person name="Ringwald M."/>
            <person name="Rost B."/>
            <person name="Ruan Y."/>
            <person name="Salzberg S.L."/>
            <person name="Sandelin A."/>
            <person name="Schneider C."/>
            <person name="Schoenbach C."/>
            <person name="Sekiguchi K."/>
            <person name="Semple C.A."/>
            <person name="Seno S."/>
            <person name="Sessa L."/>
            <person name="Sheng Y."/>
            <person name="Shibata Y."/>
            <person name="Shimada H."/>
            <person name="Shimada K."/>
            <person name="Silva D."/>
            <person name="Sinclair B."/>
            <person name="Sperling S."/>
            <person name="Stupka E."/>
            <person name="Sugiura K."/>
            <person name="Sultana R."/>
            <person name="Takenaka Y."/>
            <person name="Taki K."/>
            <person name="Tammoja K."/>
            <person name="Tan S.L."/>
            <person name="Tang S."/>
            <person name="Taylor M.S."/>
            <person name="Tegner J."/>
            <person name="Teichmann S.A."/>
            <person name="Ueda H.R."/>
            <person name="van Nimwegen E."/>
            <person name="Verardo R."/>
            <person name="Wei C.L."/>
            <person name="Yagi K."/>
            <person name="Yamanishi H."/>
            <person name="Zabarovsky E."/>
            <person name="Zhu S."/>
            <person name="Zimmer A."/>
            <person name="Hide W."/>
            <person name="Bult C."/>
            <person name="Grimmond S.M."/>
            <person name="Teasdale R.D."/>
            <person name="Liu E.T."/>
            <person name="Brusic V."/>
            <person name="Quackenbush J."/>
            <person name="Wahlestedt C."/>
            <person name="Mattick J.S."/>
            <person name="Hume D.A."/>
            <person name="Kai C."/>
            <person name="Sasaki D."/>
            <person name="Tomaru Y."/>
            <person name="Fukuda S."/>
            <person name="Kanamori-Katayama M."/>
            <person name="Suzuki M."/>
            <person name="Aoki J."/>
            <person name="Arakawa T."/>
            <person name="Iida J."/>
            <person name="Imamura K."/>
            <person name="Itoh M."/>
            <person name="Kato T."/>
            <person name="Kawaji H."/>
            <person name="Kawagashira N."/>
            <person name="Kawashima T."/>
            <person name="Kojima M."/>
            <person name="Kondo S."/>
            <person name="Konno H."/>
            <person name="Nakano K."/>
            <person name="Ninomiya N."/>
            <person name="Nishio T."/>
            <person name="Okada M."/>
            <person name="Plessy C."/>
            <person name="Shibata K."/>
            <person name="Shiraki T."/>
            <person name="Suzuki S."/>
            <person name="Tagami M."/>
            <person name="Waki K."/>
            <person name="Watahiki A."/>
            <person name="Okamura-Oho Y."/>
            <person name="Suzuki H."/>
            <person name="Kawai J."/>
            <person name="Hayashizaki Y."/>
        </authorList>
    </citation>
    <scope>NUCLEOTIDE SEQUENCE [LARGE SCALE MRNA] (ISOFORMS 1 AND 2)</scope>
    <source>
        <strain>C57BL/6J</strain>
        <tissue>Bone marrow</tissue>
        <tissue>Corpus striatum</tissue>
        <tissue>Diencephalon</tissue>
        <tissue>Hippocampus</tissue>
        <tissue>Liver</tissue>
        <tissue>Ovary</tissue>
    </source>
</reference>
<reference key="2">
    <citation type="journal article" date="2004" name="Genome Res.">
        <title>The status, quality, and expansion of the NIH full-length cDNA project: the Mammalian Gene Collection (MGC).</title>
        <authorList>
            <consortium name="The MGC Project Team"/>
        </authorList>
    </citation>
    <scope>NUCLEOTIDE SEQUENCE [LARGE SCALE MRNA] (ISOFORM 1)</scope>
    <source>
        <strain>129</strain>
        <tissue>Mammary tumor</tissue>
    </source>
</reference>
<reference key="3">
    <citation type="journal article" date="1999" name="Br. J. Haematol.">
        <title>Def-2, -3, -6 and -8, novel mouse genes differentially expressed in the haemopoietic system.</title>
        <authorList>
            <person name="Hotfilder M."/>
            <person name="Baxendale S."/>
            <person name="Cross M.A."/>
            <person name="Sablitzky F."/>
        </authorList>
    </citation>
    <scope>NUCLEOTIDE SEQUENCE [MRNA] OF 309-414</scope>
    <scope>TISSUE SPECIFICITY</scope>
    <scope>DEVELOPMENTAL STAGE</scope>
</reference>
<reference key="4">
    <citation type="journal article" date="2010" name="Cell">
        <title>A tissue-specific atlas of mouse protein phosphorylation and expression.</title>
        <authorList>
            <person name="Huttlin E.L."/>
            <person name="Jedrychowski M.P."/>
            <person name="Elias J.E."/>
            <person name="Goswami T."/>
            <person name="Rad R."/>
            <person name="Beausoleil S.A."/>
            <person name="Villen J."/>
            <person name="Haas W."/>
            <person name="Sowa M.E."/>
            <person name="Gygi S.P."/>
        </authorList>
    </citation>
    <scope>PHOSPHORYLATION [LARGE SCALE ANALYSIS] AT SER-437</scope>
    <scope>IDENTIFICATION BY MASS SPECTROMETRY [LARGE SCALE ANALYSIS]</scope>
    <source>
        <tissue>Heart</tissue>
        <tissue>Lung</tissue>
    </source>
</reference>
<reference key="5">
    <citation type="journal article" date="2016" name="JCI Insight">
        <title>PLEKHM1/DEF8/RAB7 complex regulates lysosome positioning and bone homeostasis.</title>
        <authorList>
            <person name="Fujiwara T."/>
            <person name="Ye S."/>
            <person name="Castro-Gomes T."/>
            <person name="Winchell C.G."/>
            <person name="Andrews N.W."/>
            <person name="Voth D.E."/>
            <person name="Varughese K.I."/>
            <person name="Mackintosh S.G."/>
            <person name="Feng Y."/>
            <person name="Pavlos N."/>
            <person name="Nakamura T."/>
            <person name="Manolagas S.C."/>
            <person name="Zhao H."/>
        </authorList>
    </citation>
    <scope>FUNCTION</scope>
    <scope>INTERACTION WITH PLEKHM1</scope>
</reference>
<gene>
    <name type="primary">Def8</name>
    <name type="synonym">D8Ertd713e</name>
</gene>
<evidence type="ECO:0000255" key="1">
    <source>
        <dbReference type="PROSITE-ProRule" id="PRU00226"/>
    </source>
</evidence>
<evidence type="ECO:0000256" key="2">
    <source>
        <dbReference type="SAM" id="MobiDB-lite"/>
    </source>
</evidence>
<evidence type="ECO:0000269" key="3">
    <source>
    </source>
</evidence>
<evidence type="ECO:0000269" key="4">
    <source>
    </source>
</evidence>
<evidence type="ECO:0000303" key="5">
    <source>
    </source>
</evidence>
<evidence type="ECO:0000305" key="6"/>
<evidence type="ECO:0007744" key="7">
    <source>
    </source>
</evidence>